<name>BIMC_BURTA</name>
<feature type="chain" id="PRO_0000458488" description="Inactive autotransporter heptosyltransferase BimC">
    <location>
        <begin position="1"/>
        <end position="423"/>
    </location>
</feature>
<feature type="region of interest" description="Disordered" evidence="1">
    <location>
        <begin position="1"/>
        <end position="49"/>
    </location>
</feature>
<feature type="compositionally biased region" description="Polar residues" evidence="1">
    <location>
        <begin position="1"/>
        <end position="10"/>
    </location>
</feature>
<feature type="binding site" evidence="2">
    <location>
        <position position="371"/>
    </location>
    <ligand>
        <name>Fe(3+)</name>
        <dbReference type="ChEBI" id="CHEBI:29034"/>
        <note>structural</note>
    </ligand>
</feature>
<feature type="binding site" evidence="2">
    <location>
        <position position="374"/>
    </location>
    <ligand>
        <name>Fe(3+)</name>
        <dbReference type="ChEBI" id="CHEBI:29034"/>
        <note>structural</note>
    </ligand>
</feature>
<feature type="binding site" evidence="2">
    <location>
        <position position="390"/>
    </location>
    <ligand>
        <name>Fe(3+)</name>
        <dbReference type="ChEBI" id="CHEBI:29034"/>
        <note>structural</note>
    </ligand>
</feature>
<feature type="binding site" evidence="2">
    <location>
        <position position="402"/>
    </location>
    <ligand>
        <name>Fe(3+)</name>
        <dbReference type="ChEBI" id="CHEBI:29034"/>
        <note>structural</note>
    </ligand>
</feature>
<feature type="mutagenesis site" description="No effect on iron binding, localization and actin tail formation." evidence="2">
    <original>H</original>
    <variation>A</variation>
    <location>
        <position position="324"/>
    </location>
</feature>
<feature type="mutagenesis site" description="Loss of iron binding. Enhances oligomerization. Loss of BimC and BimA polar localization. Loss of actin tail formation during infection of host cells." evidence="2">
    <original>C</original>
    <variation>S</variation>
    <location>
        <position position="371"/>
    </location>
</feature>
<feature type="mutagenesis site" description="Loss of iron binding. Enhances oligomerization. Loss of BimC and BimA polar localization. Loss of actin tail formation during infection of host cells." evidence="2">
    <original>C</original>
    <variation>S</variation>
    <location>
        <position position="374"/>
    </location>
</feature>
<feature type="mutagenesis site" description="Loss of iron binding. Enhances oligomerization. Loss of BimC and BimA polar localization. Loss of actin tail formation during infection of host cells." evidence="2">
    <original>C</original>
    <variation>S</variation>
    <location>
        <position position="390"/>
    </location>
</feature>
<feature type="mutagenesis site" description="Loss of iron binding. Enhances oligomerization. Loss of BimC and BimA polar localization. Loss of actin tail formation during infection of host cells." evidence="2">
    <original>C</original>
    <variation>S</variation>
    <location>
        <position position="402"/>
    </location>
</feature>
<accession>Q2T6X6</accession>
<proteinExistence type="evidence at protein level"/>
<sequence>MPKVTFSGSAPTLGVHAPPALDPRQPASPPPAASNGTHARGFSPPADMPTWSGTEGVRFDFNDGCRVLLPDGDWTVRLRDMHTDTPLFDAQIGAGVVTSTRKHFVPFLIEIDAGGRRVFKHLFDAHGKPVLIQFEAQRLGEALGWFGYAVKFQRQHRCKLTCSMPAPLIALLRPGYPDIEFVTPELVKPECYYATYRLGRFAGDEAHAYQPSAPQLVGAHRSAAYMLGVDPREAPPRIELTDDSRPLAGPYVCIAAQSALRCARWERPGGWRELQRFLTAAGYRIVCVDSPSPDVADESSALADVAYSLAPDTPWTERARWLRHAACLIGVPGDLSWLAWAVGAPVVLISGFTHPVSEFDTPYRVINSHACNSCWNDASANFDDADASSCPRHAGTLRQFECARLVSVEQIKRTIRSIPGIAC</sequence>
<evidence type="ECO:0000256" key="1">
    <source>
        <dbReference type="SAM" id="MobiDB-lite"/>
    </source>
</evidence>
<evidence type="ECO:0000269" key="2">
    <source>
    </source>
</evidence>
<evidence type="ECO:0000303" key="3">
    <source>
    </source>
</evidence>
<evidence type="ECO:0000305" key="4"/>
<evidence type="ECO:0000312" key="5">
    <source>
        <dbReference type="EMBL" id="ABC35216.1"/>
    </source>
</evidence>
<evidence type="ECO:0000312" key="6">
    <source>
        <dbReference type="Proteomes" id="UP000001930"/>
    </source>
</evidence>
<organism evidence="6">
    <name type="scientific">Burkholderia thailandensis (strain ATCC 700388 / DSM 13276 / CCUG 48851 / CIP 106301 / E264)</name>
    <dbReference type="NCBI Taxonomy" id="271848"/>
    <lineage>
        <taxon>Bacteria</taxon>
        <taxon>Pseudomonadati</taxon>
        <taxon>Pseudomonadota</taxon>
        <taxon>Betaproteobacteria</taxon>
        <taxon>Burkholderiales</taxon>
        <taxon>Burkholderiaceae</taxon>
        <taxon>Burkholderia</taxon>
        <taxon>pseudomallei group</taxon>
    </lineage>
</organism>
<reference evidence="6" key="1">
    <citation type="journal article" date="2005" name="BMC Genomics">
        <title>Bacterial genome adaptation to niches: divergence of the potential virulence genes in three Burkholderia species of different survival strategies.</title>
        <authorList>
            <person name="Kim H.S."/>
            <person name="Schell M.A."/>
            <person name="Yu Y."/>
            <person name="Ulrich R.L."/>
            <person name="Sarria S.H."/>
            <person name="Nierman W.C."/>
            <person name="DeShazer D."/>
        </authorList>
    </citation>
    <scope>NUCLEOTIDE SEQUENCE [LARGE SCALE GENOMIC DNA]</scope>
    <source>
        <strain evidence="6">ATCC 700388 / DSM 13276 / CCUG 48851 / CIP 106301 / E264</strain>
    </source>
</reference>
<reference evidence="4" key="2">
    <citation type="journal article" date="2015" name="Cell. Microbiol.">
        <title>A polar-localized iron-binding protein determines the polar targeting of Burkholderia BimA autotransporter and actin tail formation.</title>
        <authorList>
            <person name="Lu Q."/>
            <person name="Xu Y."/>
            <person name="Yao Q."/>
            <person name="Niu M."/>
            <person name="Shao F."/>
        </authorList>
    </citation>
    <scope>FUNCTION</scope>
    <scope>COFACTOR</scope>
    <scope>SUBUNIT</scope>
    <scope>SUBCELLULAR LOCATION</scope>
    <scope>INDUCTION</scope>
    <scope>DISRUPTION PHENOTYPE</scope>
    <scope>MUTAGENESIS OF HIS-324; CYS-371; CYS-374; CYS-390 AND CYS-402</scope>
</reference>
<comment type="function">
    <text evidence="2">Iron-binding protein which is required for the asymmetric polar distribution of the autotransporter BimA on the bacterial surface prior to its translocation into bacterial periplasm (PubMed:25293534). Lacks heptosyltransferase activity (PubMed:25293534).</text>
</comment>
<comment type="cofactor">
    <cofactor evidence="2">
        <name>Fe(3+)</name>
        <dbReference type="ChEBI" id="CHEBI:29034"/>
    </cofactor>
    <text evidence="2">Binds 1 Fe(3+) cation per subunit.</text>
</comment>
<comment type="subunit">
    <text evidence="2">Homotrimer or homotetramer.</text>
</comment>
<comment type="subcellular location">
    <subcellularLocation>
        <location evidence="2">Cell inner membrane</location>
        <topology evidence="4">Peripheral membrane protein</topology>
        <orientation evidence="4">Cytoplasmic side</orientation>
    </subcellularLocation>
    <subcellularLocation>
        <location evidence="2">Cytoplasm</location>
    </subcellularLocation>
    <text evidence="2">In host infected cells, localizes, in an iron binding-dependent manner, to one pole of the bacteria underneath the filamentous actin tail; localization is independent of BimA.</text>
</comment>
<comment type="induction">
    <text evidence="2">Induced upon infection of host cells (at protein level).</text>
</comment>
<comment type="disruption phenotype">
    <text evidence="2">During infection of host cells, loss of actin tail formation (PubMed:25293534). Loss of BimA polar localization resulting in even distribution of BimA on the surface of the bacterium (PubMed:25293534).</text>
</comment>
<comment type="similarity">
    <text evidence="4">Belongs to the glycosyltransferase 9 family.</text>
</comment>
<comment type="caution">
    <text evidence="2">Although it belongs to the bacterial autotransporter heptosyltransferase (BAHT) family, the active site and several residues involved in the binding of the sugar donor are not conserved resulting in a lack of heptosyltransferase activity.</text>
</comment>
<gene>
    <name evidence="3" type="primary">bimC</name>
    <name evidence="5" type="ordered locus">BTH_II0876</name>
</gene>
<dbReference type="EMBL" id="CP000085">
    <property type="protein sequence ID" value="ABC35216.1"/>
    <property type="molecule type" value="Genomic_DNA"/>
</dbReference>
<dbReference type="SMR" id="Q2T6X6"/>
<dbReference type="KEGG" id="bte:BTH_II0876"/>
<dbReference type="HOGENOM" id="CLU_044689_0_0_4"/>
<dbReference type="Proteomes" id="UP000001930">
    <property type="component" value="Chromosome II"/>
</dbReference>
<dbReference type="GO" id="GO:0005737">
    <property type="term" value="C:cytoplasm"/>
    <property type="evidence" value="ECO:0007669"/>
    <property type="project" value="UniProtKB-SubCell"/>
</dbReference>
<dbReference type="GO" id="GO:0005886">
    <property type="term" value="C:plasma membrane"/>
    <property type="evidence" value="ECO:0007669"/>
    <property type="project" value="UniProtKB-SubCell"/>
</dbReference>
<dbReference type="GO" id="GO:0016757">
    <property type="term" value="F:glycosyltransferase activity"/>
    <property type="evidence" value="ECO:0007669"/>
    <property type="project" value="InterPro"/>
</dbReference>
<dbReference type="GO" id="GO:0046872">
    <property type="term" value="F:metal ion binding"/>
    <property type="evidence" value="ECO:0007669"/>
    <property type="project" value="UniProtKB-KW"/>
</dbReference>
<dbReference type="Gene3D" id="3.40.50.2000">
    <property type="entry name" value="Glycogen Phosphorylase B"/>
    <property type="match status" value="1"/>
</dbReference>
<dbReference type="InterPro" id="IPR030929">
    <property type="entry name" value="Aah/TibC-like"/>
</dbReference>
<dbReference type="InterPro" id="IPR002201">
    <property type="entry name" value="Glyco_trans_9"/>
</dbReference>
<dbReference type="InterPro" id="IPR049327">
    <property type="entry name" value="TibC/BAHTCr-like_N"/>
</dbReference>
<dbReference type="NCBIfam" id="TIGR04414">
    <property type="entry name" value="hepto_Aah_TibC"/>
    <property type="match status" value="1"/>
</dbReference>
<dbReference type="Pfam" id="PF01075">
    <property type="entry name" value="Glyco_transf_9"/>
    <property type="match status" value="1"/>
</dbReference>
<dbReference type="Pfam" id="PF21129">
    <property type="entry name" value="TibC_1st"/>
    <property type="match status" value="1"/>
</dbReference>
<dbReference type="SUPFAM" id="SSF53756">
    <property type="entry name" value="UDP-Glycosyltransferase/glycogen phosphorylase"/>
    <property type="match status" value="1"/>
</dbReference>
<protein>
    <recommendedName>
        <fullName evidence="4">Inactive autotransporter heptosyltransferase BimC</fullName>
    </recommendedName>
</protein>
<keyword id="KW-0997">Cell inner membrane</keyword>
<keyword id="KW-1003">Cell membrane</keyword>
<keyword id="KW-0963">Cytoplasm</keyword>
<keyword id="KW-0408">Iron</keyword>
<keyword id="KW-0472">Membrane</keyword>
<keyword id="KW-0479">Metal-binding</keyword>